<feature type="chain" id="PRO_1000054573" description="Large ribosomal subunit protein uL16">
    <location>
        <begin position="1"/>
        <end position="137"/>
    </location>
</feature>
<feature type="region of interest" description="Disordered" evidence="2">
    <location>
        <begin position="1"/>
        <end position="24"/>
    </location>
</feature>
<feature type="compositionally biased region" description="Basic residues" evidence="2">
    <location>
        <begin position="1"/>
        <end position="17"/>
    </location>
</feature>
<keyword id="KW-0687">Ribonucleoprotein</keyword>
<keyword id="KW-0689">Ribosomal protein</keyword>
<keyword id="KW-0694">RNA-binding</keyword>
<keyword id="KW-0699">rRNA-binding</keyword>
<keyword id="KW-0820">tRNA-binding</keyword>
<accession>A4SSZ9</accession>
<comment type="function">
    <text evidence="1">Binds 23S rRNA and is also seen to make contacts with the A and possibly P site tRNAs.</text>
</comment>
<comment type="subunit">
    <text evidence="1">Part of the 50S ribosomal subunit.</text>
</comment>
<comment type="similarity">
    <text evidence="1">Belongs to the universal ribosomal protein uL16 family.</text>
</comment>
<sequence length="137" mass="15396">MLQPKRTKFRKTHKGRNRGLANTGNEVSFGTFGLKATSRGQLTARQIEAARRAMTRHVKRQGKIWIRVFPDKPITEKPLEVRMGKGKGNVEYWVCPIQPGKVLYEMDGVPEALAREAFALAAAKLSVQTTFVIKTVM</sequence>
<gene>
    <name evidence="1" type="primary">rplP</name>
    <name type="ordered locus">ASA_4080</name>
</gene>
<reference key="1">
    <citation type="journal article" date="2008" name="BMC Genomics">
        <title>The genome of Aeromonas salmonicida subsp. salmonicida A449: insights into the evolution of a fish pathogen.</title>
        <authorList>
            <person name="Reith M.E."/>
            <person name="Singh R.K."/>
            <person name="Curtis B."/>
            <person name="Boyd J.M."/>
            <person name="Bouevitch A."/>
            <person name="Kimball J."/>
            <person name="Munholland J."/>
            <person name="Murphy C."/>
            <person name="Sarty D."/>
            <person name="Williams J."/>
            <person name="Nash J.H."/>
            <person name="Johnson S.C."/>
            <person name="Brown L.L."/>
        </authorList>
    </citation>
    <scope>NUCLEOTIDE SEQUENCE [LARGE SCALE GENOMIC DNA]</scope>
    <source>
        <strain>A449</strain>
    </source>
</reference>
<proteinExistence type="inferred from homology"/>
<dbReference type="EMBL" id="CP000644">
    <property type="protein sequence ID" value="ABO92021.1"/>
    <property type="molecule type" value="Genomic_DNA"/>
</dbReference>
<dbReference type="RefSeq" id="WP_005319737.1">
    <property type="nucleotide sequence ID" value="NC_009348.1"/>
</dbReference>
<dbReference type="SMR" id="A4SSZ9"/>
<dbReference type="STRING" id="29491.GCA_000820065_03472"/>
<dbReference type="GeneID" id="79877773"/>
<dbReference type="KEGG" id="asa:ASA_4080"/>
<dbReference type="eggNOG" id="COG0197">
    <property type="taxonomic scope" value="Bacteria"/>
</dbReference>
<dbReference type="HOGENOM" id="CLU_078858_2_1_6"/>
<dbReference type="Proteomes" id="UP000000225">
    <property type="component" value="Chromosome"/>
</dbReference>
<dbReference type="GO" id="GO:0022625">
    <property type="term" value="C:cytosolic large ribosomal subunit"/>
    <property type="evidence" value="ECO:0007669"/>
    <property type="project" value="TreeGrafter"/>
</dbReference>
<dbReference type="GO" id="GO:0019843">
    <property type="term" value="F:rRNA binding"/>
    <property type="evidence" value="ECO:0007669"/>
    <property type="project" value="UniProtKB-UniRule"/>
</dbReference>
<dbReference type="GO" id="GO:0003735">
    <property type="term" value="F:structural constituent of ribosome"/>
    <property type="evidence" value="ECO:0007669"/>
    <property type="project" value="InterPro"/>
</dbReference>
<dbReference type="GO" id="GO:0000049">
    <property type="term" value="F:tRNA binding"/>
    <property type="evidence" value="ECO:0007669"/>
    <property type="project" value="UniProtKB-KW"/>
</dbReference>
<dbReference type="GO" id="GO:0006412">
    <property type="term" value="P:translation"/>
    <property type="evidence" value="ECO:0007669"/>
    <property type="project" value="UniProtKB-UniRule"/>
</dbReference>
<dbReference type="CDD" id="cd01433">
    <property type="entry name" value="Ribosomal_L16_L10e"/>
    <property type="match status" value="1"/>
</dbReference>
<dbReference type="FunFam" id="3.90.1170.10:FF:000001">
    <property type="entry name" value="50S ribosomal protein L16"/>
    <property type="match status" value="1"/>
</dbReference>
<dbReference type="Gene3D" id="3.90.1170.10">
    <property type="entry name" value="Ribosomal protein L10e/L16"/>
    <property type="match status" value="1"/>
</dbReference>
<dbReference type="HAMAP" id="MF_01342">
    <property type="entry name" value="Ribosomal_uL16"/>
    <property type="match status" value="1"/>
</dbReference>
<dbReference type="InterPro" id="IPR047873">
    <property type="entry name" value="Ribosomal_uL16"/>
</dbReference>
<dbReference type="InterPro" id="IPR000114">
    <property type="entry name" value="Ribosomal_uL16_bact-type"/>
</dbReference>
<dbReference type="InterPro" id="IPR020798">
    <property type="entry name" value="Ribosomal_uL16_CS"/>
</dbReference>
<dbReference type="InterPro" id="IPR016180">
    <property type="entry name" value="Ribosomal_uL16_dom"/>
</dbReference>
<dbReference type="InterPro" id="IPR036920">
    <property type="entry name" value="Ribosomal_uL16_sf"/>
</dbReference>
<dbReference type="NCBIfam" id="TIGR01164">
    <property type="entry name" value="rplP_bact"/>
    <property type="match status" value="1"/>
</dbReference>
<dbReference type="PANTHER" id="PTHR12220">
    <property type="entry name" value="50S/60S RIBOSOMAL PROTEIN L16"/>
    <property type="match status" value="1"/>
</dbReference>
<dbReference type="PANTHER" id="PTHR12220:SF13">
    <property type="entry name" value="LARGE RIBOSOMAL SUBUNIT PROTEIN UL16M"/>
    <property type="match status" value="1"/>
</dbReference>
<dbReference type="Pfam" id="PF00252">
    <property type="entry name" value="Ribosomal_L16"/>
    <property type="match status" value="1"/>
</dbReference>
<dbReference type="PRINTS" id="PR00060">
    <property type="entry name" value="RIBOSOMALL16"/>
</dbReference>
<dbReference type="SUPFAM" id="SSF54686">
    <property type="entry name" value="Ribosomal protein L16p/L10e"/>
    <property type="match status" value="1"/>
</dbReference>
<dbReference type="PROSITE" id="PS00586">
    <property type="entry name" value="RIBOSOMAL_L16_1"/>
    <property type="match status" value="1"/>
</dbReference>
<dbReference type="PROSITE" id="PS00701">
    <property type="entry name" value="RIBOSOMAL_L16_2"/>
    <property type="match status" value="1"/>
</dbReference>
<organism>
    <name type="scientific">Aeromonas salmonicida (strain A449)</name>
    <dbReference type="NCBI Taxonomy" id="382245"/>
    <lineage>
        <taxon>Bacteria</taxon>
        <taxon>Pseudomonadati</taxon>
        <taxon>Pseudomonadota</taxon>
        <taxon>Gammaproteobacteria</taxon>
        <taxon>Aeromonadales</taxon>
        <taxon>Aeromonadaceae</taxon>
        <taxon>Aeromonas</taxon>
    </lineage>
</organism>
<protein>
    <recommendedName>
        <fullName evidence="1">Large ribosomal subunit protein uL16</fullName>
    </recommendedName>
    <alternativeName>
        <fullName evidence="3">50S ribosomal protein L16</fullName>
    </alternativeName>
</protein>
<evidence type="ECO:0000255" key="1">
    <source>
        <dbReference type="HAMAP-Rule" id="MF_01342"/>
    </source>
</evidence>
<evidence type="ECO:0000256" key="2">
    <source>
        <dbReference type="SAM" id="MobiDB-lite"/>
    </source>
</evidence>
<evidence type="ECO:0000305" key="3"/>
<name>RL16_AERS4</name>